<name>LPXH_XANOR</name>
<proteinExistence type="inferred from homology"/>
<comment type="function">
    <text evidence="1">Hydrolyzes the pyrophosphate bond of UDP-2,3-diacylglucosamine to yield 2,3-diacylglucosamine 1-phosphate (lipid X) and UMP by catalyzing the attack of water at the alpha-P atom. Involved in the biosynthesis of lipid A, a phosphorylated glycolipid that anchors the lipopolysaccharide to the outer membrane of the cell.</text>
</comment>
<comment type="catalytic activity">
    <reaction evidence="1">
        <text>UDP-2-N,3-O-bis[(3R)-3-hydroxytetradecanoyl]-alpha-D-glucosamine + H2O = 2-N,3-O-bis[(3R)-3-hydroxytetradecanoyl]-alpha-D-glucosaminyl 1-phosphate + UMP + 2 H(+)</text>
        <dbReference type="Rhea" id="RHEA:25213"/>
        <dbReference type="ChEBI" id="CHEBI:15377"/>
        <dbReference type="ChEBI" id="CHEBI:15378"/>
        <dbReference type="ChEBI" id="CHEBI:57865"/>
        <dbReference type="ChEBI" id="CHEBI:57957"/>
        <dbReference type="ChEBI" id="CHEBI:78847"/>
        <dbReference type="EC" id="3.6.1.54"/>
    </reaction>
</comment>
<comment type="cofactor">
    <cofactor evidence="1">
        <name>Mn(2+)</name>
        <dbReference type="ChEBI" id="CHEBI:29035"/>
    </cofactor>
    <text evidence="1">Binds 2 Mn(2+) ions per subunit in a binuclear metal center.</text>
</comment>
<comment type="pathway">
    <text evidence="1">Glycolipid biosynthesis; lipid IV(A) biosynthesis; lipid IV(A) from (3R)-3-hydroxytetradecanoyl-[acyl-carrier-protein] and UDP-N-acetyl-alpha-D-glucosamine: step 4/6.</text>
</comment>
<comment type="subcellular location">
    <subcellularLocation>
        <location evidence="1">Cell inner membrane</location>
        <topology evidence="1">Peripheral membrane protein</topology>
        <orientation evidence="1">Cytoplasmic side</orientation>
    </subcellularLocation>
</comment>
<comment type="similarity">
    <text evidence="1">Belongs to the LpxH family.</text>
</comment>
<gene>
    <name evidence="1" type="primary">lpxH</name>
    <name type="ordered locus">XOO3672</name>
</gene>
<keyword id="KW-0997">Cell inner membrane</keyword>
<keyword id="KW-1003">Cell membrane</keyword>
<keyword id="KW-0378">Hydrolase</keyword>
<keyword id="KW-0441">Lipid A biosynthesis</keyword>
<keyword id="KW-0444">Lipid biosynthesis</keyword>
<keyword id="KW-0443">Lipid metabolism</keyword>
<keyword id="KW-0464">Manganese</keyword>
<keyword id="KW-0472">Membrane</keyword>
<keyword id="KW-0479">Metal-binding</keyword>
<keyword id="KW-1185">Reference proteome</keyword>
<feature type="chain" id="PRO_1000025098" description="UDP-2,3-diacylglucosamine hydrolase">
    <location>
        <begin position="1"/>
        <end position="247"/>
    </location>
</feature>
<feature type="binding site" evidence="1">
    <location>
        <position position="8"/>
    </location>
    <ligand>
        <name>Mn(2+)</name>
        <dbReference type="ChEBI" id="CHEBI:29035"/>
        <label>1</label>
    </ligand>
</feature>
<feature type="binding site" evidence="1">
    <location>
        <position position="10"/>
    </location>
    <ligand>
        <name>Mn(2+)</name>
        <dbReference type="ChEBI" id="CHEBI:29035"/>
        <label>1</label>
    </ligand>
</feature>
<feature type="binding site" evidence="1">
    <location>
        <position position="41"/>
    </location>
    <ligand>
        <name>Mn(2+)</name>
        <dbReference type="ChEBI" id="CHEBI:29035"/>
        <label>1</label>
    </ligand>
</feature>
<feature type="binding site" evidence="1">
    <location>
        <position position="41"/>
    </location>
    <ligand>
        <name>Mn(2+)</name>
        <dbReference type="ChEBI" id="CHEBI:29035"/>
        <label>2</label>
    </ligand>
</feature>
<feature type="binding site" evidence="1">
    <location>
        <begin position="79"/>
        <end position="80"/>
    </location>
    <ligand>
        <name>substrate</name>
    </ligand>
</feature>
<feature type="binding site" evidence="1">
    <location>
        <position position="79"/>
    </location>
    <ligand>
        <name>Mn(2+)</name>
        <dbReference type="ChEBI" id="CHEBI:29035"/>
        <label>2</label>
    </ligand>
</feature>
<feature type="binding site" evidence="1">
    <location>
        <position position="114"/>
    </location>
    <ligand>
        <name>Mn(2+)</name>
        <dbReference type="ChEBI" id="CHEBI:29035"/>
        <label>2</label>
    </ligand>
</feature>
<feature type="binding site" evidence="1">
    <location>
        <position position="122"/>
    </location>
    <ligand>
        <name>substrate</name>
    </ligand>
</feature>
<feature type="binding site" evidence="1">
    <location>
        <position position="160"/>
    </location>
    <ligand>
        <name>substrate</name>
    </ligand>
</feature>
<feature type="binding site" evidence="1">
    <location>
        <position position="171"/>
    </location>
    <ligand>
        <name>substrate</name>
    </ligand>
</feature>
<feature type="binding site" evidence="1">
    <location>
        <position position="174"/>
    </location>
    <ligand>
        <name>substrate</name>
    </ligand>
</feature>
<feature type="binding site" evidence="1">
    <location>
        <position position="202"/>
    </location>
    <ligand>
        <name>Mn(2+)</name>
        <dbReference type="ChEBI" id="CHEBI:29035"/>
        <label>2</label>
    </ligand>
</feature>
<feature type="binding site" evidence="1">
    <location>
        <position position="202"/>
    </location>
    <ligand>
        <name>substrate</name>
    </ligand>
</feature>
<feature type="binding site" evidence="1">
    <location>
        <position position="204"/>
    </location>
    <ligand>
        <name>Mn(2+)</name>
        <dbReference type="ChEBI" id="CHEBI:29035"/>
        <label>1</label>
    </ligand>
</feature>
<protein>
    <recommendedName>
        <fullName evidence="1">UDP-2,3-diacylglucosamine hydrolase</fullName>
        <ecNumber evidence="1">3.6.1.54</ecNumber>
    </recommendedName>
    <alternativeName>
        <fullName evidence="1">UDP-2,3-diacylglucosamine diphosphatase</fullName>
    </alternativeName>
</protein>
<reference key="1">
    <citation type="journal article" date="2005" name="Nucleic Acids Res.">
        <title>The genome sequence of Xanthomonas oryzae pathovar oryzae KACC10331, the bacterial blight pathogen of rice.</title>
        <authorList>
            <person name="Lee B.-M."/>
            <person name="Park Y.-J."/>
            <person name="Park D.-S."/>
            <person name="Kang H.-W."/>
            <person name="Kim J.-G."/>
            <person name="Song E.-S."/>
            <person name="Park I.-C."/>
            <person name="Yoon U.-H."/>
            <person name="Hahn J.-H."/>
            <person name="Koo B.-S."/>
            <person name="Lee G.-B."/>
            <person name="Kim H."/>
            <person name="Park H.-S."/>
            <person name="Yoon K.-O."/>
            <person name="Kim J.-H."/>
            <person name="Jung C.-H."/>
            <person name="Koh N.-H."/>
            <person name="Seo J.-S."/>
            <person name="Go S.-J."/>
        </authorList>
    </citation>
    <scope>NUCLEOTIDE SEQUENCE [LARGE SCALE GENOMIC DNA]</scope>
    <source>
        <strain>KACC10331 / KXO85</strain>
    </source>
</reference>
<dbReference type="EC" id="3.6.1.54" evidence="1"/>
<dbReference type="EMBL" id="AE013598">
    <property type="protein sequence ID" value="AAW76926.1"/>
    <property type="molecule type" value="Genomic_DNA"/>
</dbReference>
<dbReference type="SMR" id="Q5GWJ5"/>
<dbReference type="STRING" id="291331.XOO3672"/>
<dbReference type="KEGG" id="xoo:XOO3672"/>
<dbReference type="HOGENOM" id="CLU_074586_0_0_6"/>
<dbReference type="UniPathway" id="UPA00359">
    <property type="reaction ID" value="UER00480"/>
</dbReference>
<dbReference type="Proteomes" id="UP000006735">
    <property type="component" value="Chromosome"/>
</dbReference>
<dbReference type="GO" id="GO:0005737">
    <property type="term" value="C:cytoplasm"/>
    <property type="evidence" value="ECO:0007669"/>
    <property type="project" value="InterPro"/>
</dbReference>
<dbReference type="GO" id="GO:0019897">
    <property type="term" value="C:extrinsic component of plasma membrane"/>
    <property type="evidence" value="ECO:0007669"/>
    <property type="project" value="UniProtKB-UniRule"/>
</dbReference>
<dbReference type="GO" id="GO:0030145">
    <property type="term" value="F:manganese ion binding"/>
    <property type="evidence" value="ECO:0007669"/>
    <property type="project" value="UniProtKB-UniRule"/>
</dbReference>
<dbReference type="GO" id="GO:0008758">
    <property type="term" value="F:UDP-2,3-diacylglucosamine hydrolase activity"/>
    <property type="evidence" value="ECO:0007669"/>
    <property type="project" value="UniProtKB-UniRule"/>
</dbReference>
<dbReference type="GO" id="GO:0009245">
    <property type="term" value="P:lipid A biosynthetic process"/>
    <property type="evidence" value="ECO:0007669"/>
    <property type="project" value="UniProtKB-UniRule"/>
</dbReference>
<dbReference type="CDD" id="cd07398">
    <property type="entry name" value="MPP_YbbF-LpxH"/>
    <property type="match status" value="1"/>
</dbReference>
<dbReference type="Gene3D" id="3.60.21.10">
    <property type="match status" value="1"/>
</dbReference>
<dbReference type="HAMAP" id="MF_00575">
    <property type="entry name" value="LpxH"/>
    <property type="match status" value="1"/>
</dbReference>
<dbReference type="InterPro" id="IPR004843">
    <property type="entry name" value="Calcineurin-like_PHP_ApaH"/>
</dbReference>
<dbReference type="InterPro" id="IPR043461">
    <property type="entry name" value="LpxH-like"/>
</dbReference>
<dbReference type="InterPro" id="IPR029052">
    <property type="entry name" value="Metallo-depent_PP-like"/>
</dbReference>
<dbReference type="InterPro" id="IPR010138">
    <property type="entry name" value="UDP-diacylglucosamine_Hdrlase"/>
</dbReference>
<dbReference type="NCBIfam" id="TIGR01854">
    <property type="entry name" value="lipid_A_lpxH"/>
    <property type="match status" value="1"/>
</dbReference>
<dbReference type="NCBIfam" id="NF003743">
    <property type="entry name" value="PRK05340.1"/>
    <property type="match status" value="1"/>
</dbReference>
<dbReference type="PANTHER" id="PTHR34990:SF1">
    <property type="entry name" value="UDP-2,3-DIACYLGLUCOSAMINE HYDROLASE"/>
    <property type="match status" value="1"/>
</dbReference>
<dbReference type="PANTHER" id="PTHR34990">
    <property type="entry name" value="UDP-2,3-DIACYLGLUCOSAMINE HYDROLASE-RELATED"/>
    <property type="match status" value="1"/>
</dbReference>
<dbReference type="Pfam" id="PF00149">
    <property type="entry name" value="Metallophos"/>
    <property type="match status" value="1"/>
</dbReference>
<dbReference type="SUPFAM" id="SSF56300">
    <property type="entry name" value="Metallo-dependent phosphatases"/>
    <property type="match status" value="1"/>
</dbReference>
<sequence>MTTLFISDLHLDPARPAITELFLDFLRTQVRGSDALYILGDLFEAWIGDDTPSTAADAVAVALHAVADAGVPVFFMAGNRDFLVGETYAQRAGFRILPDPTVIDLYGHTTLLMHGDLLCTDDTAYQAFRAQTRDPVFQAQFLAQPLAARVAFAQQARAASQARHAELKQGDQSNVETVTDVSPAEVEATFVRYGLDRLIHGHTHRPAIHTVQAGGNTCTRIVLGDWYEQGSVLRLDADGVSLEQFAL</sequence>
<evidence type="ECO:0000255" key="1">
    <source>
        <dbReference type="HAMAP-Rule" id="MF_00575"/>
    </source>
</evidence>
<organism>
    <name type="scientific">Xanthomonas oryzae pv. oryzae (strain KACC10331 / KXO85)</name>
    <dbReference type="NCBI Taxonomy" id="291331"/>
    <lineage>
        <taxon>Bacteria</taxon>
        <taxon>Pseudomonadati</taxon>
        <taxon>Pseudomonadota</taxon>
        <taxon>Gammaproteobacteria</taxon>
        <taxon>Lysobacterales</taxon>
        <taxon>Lysobacteraceae</taxon>
        <taxon>Xanthomonas</taxon>
    </lineage>
</organism>
<accession>Q5GWJ5</accession>